<protein>
    <recommendedName>
        <fullName evidence="1">Indole-3-glycerol phosphate synthase</fullName>
        <shortName evidence="1">IGPS</shortName>
        <ecNumber evidence="1">4.1.1.48</ecNumber>
    </recommendedName>
</protein>
<dbReference type="EC" id="4.1.1.48" evidence="1"/>
<dbReference type="EMBL" id="CP000431">
    <property type="protein sequence ID" value="ABG92841.1"/>
    <property type="molecule type" value="Genomic_DNA"/>
</dbReference>
<dbReference type="RefSeq" id="WP_005247490.1">
    <property type="nucleotide sequence ID" value="NC_008268.1"/>
</dbReference>
<dbReference type="SMR" id="Q0SHZ5"/>
<dbReference type="GeneID" id="69892672"/>
<dbReference type="KEGG" id="rha:RHA1_ro01014"/>
<dbReference type="eggNOG" id="COG0134">
    <property type="taxonomic scope" value="Bacteria"/>
</dbReference>
<dbReference type="HOGENOM" id="CLU_034247_0_0_11"/>
<dbReference type="OrthoDB" id="9804217at2"/>
<dbReference type="UniPathway" id="UPA00035">
    <property type="reaction ID" value="UER00043"/>
</dbReference>
<dbReference type="Proteomes" id="UP000008710">
    <property type="component" value="Chromosome"/>
</dbReference>
<dbReference type="GO" id="GO:0004425">
    <property type="term" value="F:indole-3-glycerol-phosphate synthase activity"/>
    <property type="evidence" value="ECO:0007669"/>
    <property type="project" value="UniProtKB-UniRule"/>
</dbReference>
<dbReference type="GO" id="GO:0004640">
    <property type="term" value="F:phosphoribosylanthranilate isomerase activity"/>
    <property type="evidence" value="ECO:0007669"/>
    <property type="project" value="TreeGrafter"/>
</dbReference>
<dbReference type="GO" id="GO:0000162">
    <property type="term" value="P:L-tryptophan biosynthetic process"/>
    <property type="evidence" value="ECO:0007669"/>
    <property type="project" value="UniProtKB-UniRule"/>
</dbReference>
<dbReference type="CDD" id="cd00331">
    <property type="entry name" value="IGPS"/>
    <property type="match status" value="1"/>
</dbReference>
<dbReference type="FunFam" id="3.20.20.70:FF:000024">
    <property type="entry name" value="Indole-3-glycerol phosphate synthase"/>
    <property type="match status" value="1"/>
</dbReference>
<dbReference type="Gene3D" id="3.20.20.70">
    <property type="entry name" value="Aldolase class I"/>
    <property type="match status" value="1"/>
</dbReference>
<dbReference type="HAMAP" id="MF_00134_A">
    <property type="entry name" value="IGPS_A"/>
    <property type="match status" value="1"/>
</dbReference>
<dbReference type="HAMAP" id="MF_00134_B">
    <property type="entry name" value="IGPS_B"/>
    <property type="match status" value="1"/>
</dbReference>
<dbReference type="InterPro" id="IPR013785">
    <property type="entry name" value="Aldolase_TIM"/>
</dbReference>
<dbReference type="InterPro" id="IPR045186">
    <property type="entry name" value="Indole-3-glycerol_P_synth"/>
</dbReference>
<dbReference type="InterPro" id="IPR013798">
    <property type="entry name" value="Indole-3-glycerol_P_synth_dom"/>
</dbReference>
<dbReference type="InterPro" id="IPR001468">
    <property type="entry name" value="Indole-3-GlycerolPSynthase_CS"/>
</dbReference>
<dbReference type="InterPro" id="IPR011060">
    <property type="entry name" value="RibuloseP-bd_barrel"/>
</dbReference>
<dbReference type="NCBIfam" id="NF001369">
    <property type="entry name" value="PRK00278.1-1"/>
    <property type="match status" value="1"/>
</dbReference>
<dbReference type="NCBIfam" id="NF001377">
    <property type="entry name" value="PRK00278.2-4"/>
    <property type="match status" value="1"/>
</dbReference>
<dbReference type="PANTHER" id="PTHR22854:SF2">
    <property type="entry name" value="INDOLE-3-GLYCEROL-PHOSPHATE SYNTHASE"/>
    <property type="match status" value="1"/>
</dbReference>
<dbReference type="PANTHER" id="PTHR22854">
    <property type="entry name" value="TRYPTOPHAN BIOSYNTHESIS PROTEIN"/>
    <property type="match status" value="1"/>
</dbReference>
<dbReference type="Pfam" id="PF00218">
    <property type="entry name" value="IGPS"/>
    <property type="match status" value="1"/>
</dbReference>
<dbReference type="SUPFAM" id="SSF51366">
    <property type="entry name" value="Ribulose-phoshate binding barrel"/>
    <property type="match status" value="1"/>
</dbReference>
<dbReference type="PROSITE" id="PS00614">
    <property type="entry name" value="IGPS"/>
    <property type="match status" value="1"/>
</dbReference>
<reference key="1">
    <citation type="journal article" date="2006" name="Proc. Natl. Acad. Sci. U.S.A.">
        <title>The complete genome of Rhodococcus sp. RHA1 provides insights into a catabolic powerhouse.</title>
        <authorList>
            <person name="McLeod M.P."/>
            <person name="Warren R.L."/>
            <person name="Hsiao W.W.L."/>
            <person name="Araki N."/>
            <person name="Myhre M."/>
            <person name="Fernandes C."/>
            <person name="Miyazawa D."/>
            <person name="Wong W."/>
            <person name="Lillquist A.L."/>
            <person name="Wang D."/>
            <person name="Dosanjh M."/>
            <person name="Hara H."/>
            <person name="Petrescu A."/>
            <person name="Morin R.D."/>
            <person name="Yang G."/>
            <person name="Stott J.M."/>
            <person name="Schein J.E."/>
            <person name="Shin H."/>
            <person name="Smailus D."/>
            <person name="Siddiqui A.S."/>
            <person name="Marra M.A."/>
            <person name="Jones S.J.M."/>
            <person name="Holt R."/>
            <person name="Brinkman F.S.L."/>
            <person name="Miyauchi K."/>
            <person name="Fukuda M."/>
            <person name="Davies J.E."/>
            <person name="Mohn W.W."/>
            <person name="Eltis L.D."/>
        </authorList>
    </citation>
    <scope>NUCLEOTIDE SEQUENCE [LARGE SCALE GENOMIC DNA]</scope>
    <source>
        <strain>RHA1</strain>
    </source>
</reference>
<proteinExistence type="inferred from homology"/>
<name>TRPC_RHOJR</name>
<comment type="catalytic activity">
    <reaction evidence="1">
        <text>1-(2-carboxyphenylamino)-1-deoxy-D-ribulose 5-phosphate + H(+) = (1S,2R)-1-C-(indol-3-yl)glycerol 3-phosphate + CO2 + H2O</text>
        <dbReference type="Rhea" id="RHEA:23476"/>
        <dbReference type="ChEBI" id="CHEBI:15377"/>
        <dbReference type="ChEBI" id="CHEBI:15378"/>
        <dbReference type="ChEBI" id="CHEBI:16526"/>
        <dbReference type="ChEBI" id="CHEBI:58613"/>
        <dbReference type="ChEBI" id="CHEBI:58866"/>
        <dbReference type="EC" id="4.1.1.48"/>
    </reaction>
</comment>
<comment type="pathway">
    <text evidence="1">Amino-acid biosynthesis; L-tryptophan biosynthesis; L-tryptophan from chorismate: step 4/5.</text>
</comment>
<comment type="similarity">
    <text evidence="1">Belongs to the TrpC family.</text>
</comment>
<keyword id="KW-0028">Amino-acid biosynthesis</keyword>
<keyword id="KW-0057">Aromatic amino acid biosynthesis</keyword>
<keyword id="KW-0210">Decarboxylase</keyword>
<keyword id="KW-0456">Lyase</keyword>
<keyword id="KW-0822">Tryptophan biosynthesis</keyword>
<evidence type="ECO:0000255" key="1">
    <source>
        <dbReference type="HAMAP-Rule" id="MF_00134"/>
    </source>
</evidence>
<gene>
    <name evidence="1" type="primary">trpC</name>
    <name type="ordered locus">RHA1_ro01014</name>
</gene>
<organism>
    <name type="scientific">Rhodococcus jostii (strain RHA1)</name>
    <dbReference type="NCBI Taxonomy" id="101510"/>
    <lineage>
        <taxon>Bacteria</taxon>
        <taxon>Bacillati</taxon>
        <taxon>Actinomycetota</taxon>
        <taxon>Actinomycetes</taxon>
        <taxon>Mycobacteriales</taxon>
        <taxon>Nocardiaceae</taxon>
        <taxon>Rhodococcus</taxon>
    </lineage>
</organism>
<accession>Q0SHZ5</accession>
<feature type="chain" id="PRO_1000018550" description="Indole-3-glycerol phosphate synthase">
    <location>
        <begin position="1"/>
        <end position="269"/>
    </location>
</feature>
<sequence>MTVLDSILDGVRADVAAREAVLDFAAVKAAAAAAPPALDAAAALLEPGIGVIAEVKRASPSKGALADITDPAELAAAYQAGGARVISVLTEERRFQGSLADLDAVRRAVSIPILRKDFIVGPYQIHEARAHGADVVLLIVAALEQDALASLIDRTESLGMTALVEVHTEEEANRALEAGAKVIGVNARNLKTLEVDKNTFGEIAPGLPTEIIKIAESGVRGTADLLAYAGAGADAVLVGEGLVTSGDPRKAVADLVNAGAHPSCPKPSR</sequence>